<comment type="function">
    <text evidence="7 8">Has a partially redundant function to ECM33 in cell wall integrity. May be involved in a repair mechanism activated in response to cell wall damage.</text>
</comment>
<comment type="subcellular location">
    <subcellularLocation>
        <location>Cell membrane</location>
        <topology>Lipid-anchor</topology>
        <topology>GPI-anchor</topology>
    </subcellularLocation>
    <subcellularLocation>
        <location>Secreted</location>
        <location>Cell wall</location>
    </subcellularLocation>
    <text>Identified as GPI-anchored plasma membrane protein (GPI-PMP) as well as non-covalently-linked, soluble protein of the cell wall. Secreted by regenerating protoplasts. In budded cells, concentrates at the surface of the buds.</text>
</comment>
<comment type="induction">
    <text evidence="3 4 6">Positively regulated by cell integrity signaling through MPK1 in response to cell wall perturbation. Induction is dependent on transcription factor RLM1.</text>
</comment>
<comment type="PTM">
    <text>Extensively N- and O-mannosylated.</text>
</comment>
<comment type="biotechnology">
    <text evidence="8">Mannoprotein called haze protective factor from wine that is able to prevent visible wine protein haze formation. This mannoprotein showed haze-protective activity against wine proteins and BSA when either was heated in white wine.</text>
</comment>
<comment type="miscellaneous">
    <text evidence="5">Present with 11700 molecules/cell in log phase SD medium.</text>
</comment>
<comment type="similarity">
    <text evidence="9">Belongs to the SPS2 family.</text>
</comment>
<proteinExistence type="evidence at protein level"/>
<feature type="signal peptide" evidence="1">
    <location>
        <begin position="1"/>
        <end position="19"/>
    </location>
</feature>
<feature type="chain" id="PRO_0000033193" description="Cell wall mannoprotein PST1">
    <location>
        <begin position="20"/>
        <end position="419"/>
    </location>
</feature>
<feature type="propeptide" id="PRO_0000033194" description="Removed in mature form" evidence="1">
    <location>
        <begin position="420"/>
        <end position="444"/>
    </location>
</feature>
<feature type="region of interest" description="Disordered" evidence="2">
    <location>
        <begin position="359"/>
        <end position="418"/>
    </location>
</feature>
<feature type="compositionally biased region" description="Low complexity" evidence="2">
    <location>
        <begin position="359"/>
        <end position="381"/>
    </location>
</feature>
<feature type="compositionally biased region" description="Low complexity" evidence="2">
    <location>
        <begin position="395"/>
        <end position="418"/>
    </location>
</feature>
<feature type="lipid moiety-binding region" description="GPI-anchor amidated asparagine" evidence="1">
    <location>
        <position position="419"/>
    </location>
</feature>
<feature type="glycosylation site" description="N-linked (GlcNAc...) asparagine" evidence="1">
    <location>
        <position position="57"/>
    </location>
</feature>
<feature type="glycosylation site" description="N-linked (GlcNAc...) asparagine" evidence="1">
    <location>
        <position position="76"/>
    </location>
</feature>
<feature type="glycosylation site" description="N-linked (GlcNAc...) asparagine" evidence="1">
    <location>
        <position position="83"/>
    </location>
</feature>
<feature type="glycosylation site" description="N-linked (GlcNAc...) asparagine" evidence="1">
    <location>
        <position position="86"/>
    </location>
</feature>
<feature type="glycosylation site" description="N-linked (GlcNAc...) asparagine" evidence="1">
    <location>
        <position position="196"/>
    </location>
</feature>
<feature type="glycosylation site" description="N-linked (GlcNAc...) asparagine" evidence="8">
    <location>
        <position position="210"/>
    </location>
</feature>
<feature type="glycosylation site" description="N-linked (GlcNAc...) asparagine" evidence="8">
    <location>
        <position position="228"/>
    </location>
</feature>
<feature type="glycosylation site" description="N-linked (GlcNAc...) asparagine" evidence="8">
    <location>
        <position position="235"/>
    </location>
</feature>
<feature type="glycosylation site" description="N-linked (GlcNAc...) asparagine" evidence="8">
    <location>
        <position position="242"/>
    </location>
</feature>
<feature type="glycosylation site" description="N-linked (GlcNAc...) asparagine" evidence="1">
    <location>
        <position position="263"/>
    </location>
</feature>
<feature type="glycosylation site" description="N-linked (GlcNAc...) asparagine" evidence="1">
    <location>
        <position position="268"/>
    </location>
</feature>
<feature type="glycosylation site" description="N-linked (GlcNAc...) asparagine" evidence="1">
    <location>
        <position position="280"/>
    </location>
</feature>
<feature type="glycosylation site" description="N-linked (GlcNAc...) asparagine" evidence="1">
    <location>
        <position position="292"/>
    </location>
</feature>
<feature type="glycosylation site" description="N-linked (GlcNAc...) asparagine" evidence="1">
    <location>
        <position position="305"/>
    </location>
</feature>
<feature type="glycosylation site" description="N-linked (GlcNAc...) asparagine" evidence="8">
    <location>
        <position position="329"/>
    </location>
</feature>
<evidence type="ECO:0000255" key="1"/>
<evidence type="ECO:0000256" key="2">
    <source>
        <dbReference type="SAM" id="MobiDB-lite"/>
    </source>
</evidence>
<evidence type="ECO:0000269" key="3">
    <source>
    </source>
</evidence>
<evidence type="ECO:0000269" key="4">
    <source>
    </source>
</evidence>
<evidence type="ECO:0000269" key="5">
    <source>
    </source>
</evidence>
<evidence type="ECO:0000269" key="6">
    <source>
    </source>
</evidence>
<evidence type="ECO:0000269" key="7">
    <source>
    </source>
</evidence>
<evidence type="ECO:0000269" key="8">
    <source>
    </source>
</evidence>
<evidence type="ECO:0000305" key="9"/>
<keyword id="KW-1003">Cell membrane</keyword>
<keyword id="KW-0134">Cell wall</keyword>
<keyword id="KW-0903">Direct protein sequencing</keyword>
<keyword id="KW-0325">Glycoprotein</keyword>
<keyword id="KW-0336">GPI-anchor</keyword>
<keyword id="KW-0449">Lipoprotein</keyword>
<keyword id="KW-0472">Membrane</keyword>
<keyword id="KW-1185">Reference proteome</keyword>
<keyword id="KW-0964">Secreted</keyword>
<keyword id="KW-0732">Signal</keyword>
<organism>
    <name type="scientific">Saccharomyces cerevisiae (strain ATCC 204508 / S288c)</name>
    <name type="common">Baker's yeast</name>
    <dbReference type="NCBI Taxonomy" id="559292"/>
    <lineage>
        <taxon>Eukaryota</taxon>
        <taxon>Fungi</taxon>
        <taxon>Dikarya</taxon>
        <taxon>Ascomycota</taxon>
        <taxon>Saccharomycotina</taxon>
        <taxon>Saccharomycetes</taxon>
        <taxon>Saccharomycetales</taxon>
        <taxon>Saccharomycetaceae</taxon>
        <taxon>Saccharomyces</taxon>
    </lineage>
</organism>
<gene>
    <name type="primary">PST1</name>
    <name type="synonym">HPF2</name>
    <name type="ordered locus">YDR055W</name>
    <name type="ORF">D4214</name>
    <name type="ORF">YD9609.09</name>
</gene>
<sequence>MQLHSLIASTALLITSALAATSSSSSIPSSCTISSHATATAQSDLDKYSRCDTLVGNLTIGGGLKTGALANVKEINGSLTIFNATNLTSFAADSLESITDSLNLQSLTILTSASFGSLQSVDSIKLITLPAISSFTSNIKSANNIYISDTSLQSVDGFSALKKVNVFNVNNNKKLTSIKSPVETVSDSLQFSFNGNQTKITFDDLVWANNISLTDVHSVSFANLQKINSSLGFINNSISSLNFTKLNTIGQTFSIVSNDYLKNLSFSNLSTIGGALVVANNTGLQKIGGLDNLTTIGGTLEVVGNFTSLNLDSLKSVKGGADVESKSSNFSCNALKALQKKGGIKGESFVCKNGASSTSVKLSSTSKSQSSQTTAKVSKSSSKAEEKKFTSGDIKAAASASSVSSSGASSSSSKSSKGNAAIMAPIGQTTPLVGLLTAIIMSIM</sequence>
<name>PST1_YEAST</name>
<accession>Q12355</accession>
<accession>D6VS41</accession>
<dbReference type="EMBL" id="X84162">
    <property type="protein sequence ID" value="CAA58971.1"/>
    <property type="molecule type" value="Genomic_DNA"/>
</dbReference>
<dbReference type="EMBL" id="Z74351">
    <property type="protein sequence ID" value="CAA98873.1"/>
    <property type="molecule type" value="Genomic_DNA"/>
</dbReference>
<dbReference type="EMBL" id="Z49209">
    <property type="protein sequence ID" value="CAA89084.1"/>
    <property type="molecule type" value="Genomic_DNA"/>
</dbReference>
<dbReference type="EMBL" id="BK006938">
    <property type="protein sequence ID" value="DAA11901.1"/>
    <property type="molecule type" value="Genomic_DNA"/>
</dbReference>
<dbReference type="PIR" id="S54039">
    <property type="entry name" value="S54039"/>
</dbReference>
<dbReference type="RefSeq" id="NP_010340.1">
    <property type="nucleotide sequence ID" value="NM_001180363.1"/>
</dbReference>
<dbReference type="SMR" id="Q12355"/>
<dbReference type="BioGRID" id="32108">
    <property type="interactions" value="72"/>
</dbReference>
<dbReference type="DIP" id="DIP-7811N"/>
<dbReference type="FunCoup" id="Q12355">
    <property type="interactions" value="132"/>
</dbReference>
<dbReference type="IntAct" id="Q12355">
    <property type="interactions" value="7"/>
</dbReference>
<dbReference type="MINT" id="Q12355"/>
<dbReference type="STRING" id="4932.YDR055W"/>
<dbReference type="GlyCosmos" id="Q12355">
    <property type="glycosylation" value="15 sites, No reported glycans"/>
</dbReference>
<dbReference type="GlyGen" id="Q12355">
    <property type="glycosylation" value="15 sites"/>
</dbReference>
<dbReference type="iPTMnet" id="Q12355"/>
<dbReference type="PaxDb" id="4932-YDR055W"/>
<dbReference type="PeptideAtlas" id="Q12355"/>
<dbReference type="PRIDE" id="Q12355"/>
<dbReference type="EnsemblFungi" id="YDR055W_mRNA">
    <property type="protein sequence ID" value="YDR055W"/>
    <property type="gene ID" value="YDR055W"/>
</dbReference>
<dbReference type="GeneID" id="851625"/>
<dbReference type="KEGG" id="sce:YDR055W"/>
<dbReference type="AGR" id="SGD:S000002462"/>
<dbReference type="SGD" id="S000002462">
    <property type="gene designation" value="PST1"/>
</dbReference>
<dbReference type="VEuPathDB" id="FungiDB:YDR055W"/>
<dbReference type="eggNOG" id="ENOG502QUZC">
    <property type="taxonomic scope" value="Eukaryota"/>
</dbReference>
<dbReference type="GeneTree" id="ENSGT00940000176339"/>
<dbReference type="HOGENOM" id="CLU_035846_0_0_1"/>
<dbReference type="InParanoid" id="Q12355"/>
<dbReference type="OMA" id="WANNITF"/>
<dbReference type="OrthoDB" id="536881at2759"/>
<dbReference type="BioCyc" id="YEAST:G3O-29664-MONOMER"/>
<dbReference type="BioGRID-ORCS" id="851625">
    <property type="hits" value="0 hits in 10 CRISPR screens"/>
</dbReference>
<dbReference type="PRO" id="PR:Q12355"/>
<dbReference type="Proteomes" id="UP000002311">
    <property type="component" value="Chromosome IV"/>
</dbReference>
<dbReference type="RNAct" id="Q12355">
    <property type="molecule type" value="protein"/>
</dbReference>
<dbReference type="GO" id="GO:0071944">
    <property type="term" value="C:cell periphery"/>
    <property type="evidence" value="ECO:0007005"/>
    <property type="project" value="SGD"/>
</dbReference>
<dbReference type="GO" id="GO:0005576">
    <property type="term" value="C:extracellular region"/>
    <property type="evidence" value="ECO:0007669"/>
    <property type="project" value="UniProtKB-KW"/>
</dbReference>
<dbReference type="GO" id="GO:0009277">
    <property type="term" value="C:fungal-type cell wall"/>
    <property type="evidence" value="ECO:0000314"/>
    <property type="project" value="SGD"/>
</dbReference>
<dbReference type="GO" id="GO:0000324">
    <property type="term" value="C:fungal-type vacuole"/>
    <property type="evidence" value="ECO:0007005"/>
    <property type="project" value="SGD"/>
</dbReference>
<dbReference type="GO" id="GO:0005886">
    <property type="term" value="C:plasma membrane"/>
    <property type="evidence" value="ECO:0000314"/>
    <property type="project" value="SGD"/>
</dbReference>
<dbReference type="GO" id="GO:0098552">
    <property type="term" value="C:side of membrane"/>
    <property type="evidence" value="ECO:0007669"/>
    <property type="project" value="UniProtKB-KW"/>
</dbReference>
<dbReference type="GO" id="GO:0031505">
    <property type="term" value="P:fungal-type cell wall organization"/>
    <property type="evidence" value="ECO:0000316"/>
    <property type="project" value="SGD"/>
</dbReference>
<dbReference type="FunFam" id="3.80.20.20:FF:000016">
    <property type="entry name" value="Cell wall protein ECM33"/>
    <property type="match status" value="1"/>
</dbReference>
<dbReference type="Gene3D" id="3.80.20.20">
    <property type="entry name" value="Receptor L-domain"/>
    <property type="match status" value="2"/>
</dbReference>
<dbReference type="InterPro" id="IPR051648">
    <property type="entry name" value="CWI-Assembly_Regulator"/>
</dbReference>
<dbReference type="InterPro" id="IPR036941">
    <property type="entry name" value="Rcpt_L-dom_sf"/>
</dbReference>
<dbReference type="PANTHER" id="PTHR31018:SF3">
    <property type="entry name" value="RECEPTOR PROTEIN-TYROSINE KINASE"/>
    <property type="match status" value="1"/>
</dbReference>
<dbReference type="PANTHER" id="PTHR31018">
    <property type="entry name" value="SPORULATION-SPECIFIC PROTEIN-RELATED"/>
    <property type="match status" value="1"/>
</dbReference>
<dbReference type="SUPFAM" id="SSF52058">
    <property type="entry name" value="L domain-like"/>
    <property type="match status" value="3"/>
</dbReference>
<protein>
    <recommendedName>
        <fullName>Cell wall mannoprotein PST1</fullName>
    </recommendedName>
    <alternativeName>
        <fullName>Haze protective factor 2</fullName>
    </alternativeName>
    <alternativeName>
        <fullName>Protoplast secreted protein 1</fullName>
    </alternativeName>
</protein>
<reference key="1">
    <citation type="journal article" date="1996" name="Yeast">
        <title>Nucleotide sequence analysis of a 32,500 bp region of the right arm of Saccharomyces cerevisiae chromosome IV.</title>
        <authorList>
            <person name="Brandt P."/>
            <person name="Ramlow S."/>
            <person name="Otto B."/>
            <person name="Bloecker H."/>
        </authorList>
    </citation>
    <scope>NUCLEOTIDE SEQUENCE [GENOMIC DNA]</scope>
    <source>
        <strain>ATCC 204508 / S288c</strain>
    </source>
</reference>
<reference key="2">
    <citation type="journal article" date="1997" name="Nature">
        <title>The nucleotide sequence of Saccharomyces cerevisiae chromosome IV.</title>
        <authorList>
            <person name="Jacq C."/>
            <person name="Alt-Moerbe J."/>
            <person name="Andre B."/>
            <person name="Arnold W."/>
            <person name="Bahr A."/>
            <person name="Ballesta J.P.G."/>
            <person name="Bargues M."/>
            <person name="Baron L."/>
            <person name="Becker A."/>
            <person name="Biteau N."/>
            <person name="Bloecker H."/>
            <person name="Blugeon C."/>
            <person name="Boskovic J."/>
            <person name="Brandt P."/>
            <person name="Brueckner M."/>
            <person name="Buitrago M.J."/>
            <person name="Coster F."/>
            <person name="Delaveau T."/>
            <person name="del Rey F."/>
            <person name="Dujon B."/>
            <person name="Eide L.G."/>
            <person name="Garcia-Cantalejo J.M."/>
            <person name="Goffeau A."/>
            <person name="Gomez-Peris A."/>
            <person name="Granotier C."/>
            <person name="Hanemann V."/>
            <person name="Hankeln T."/>
            <person name="Hoheisel J.D."/>
            <person name="Jaeger W."/>
            <person name="Jimenez A."/>
            <person name="Jonniaux J.-L."/>
            <person name="Kraemer C."/>
            <person name="Kuester H."/>
            <person name="Laamanen P."/>
            <person name="Legros Y."/>
            <person name="Louis E.J."/>
            <person name="Moeller-Rieker S."/>
            <person name="Monnet A."/>
            <person name="Moro M."/>
            <person name="Mueller-Auer S."/>
            <person name="Nussbaumer B."/>
            <person name="Paricio N."/>
            <person name="Paulin L."/>
            <person name="Perea J."/>
            <person name="Perez-Alonso M."/>
            <person name="Perez-Ortin J.E."/>
            <person name="Pohl T.M."/>
            <person name="Prydz H."/>
            <person name="Purnelle B."/>
            <person name="Rasmussen S.W."/>
            <person name="Remacha M.A."/>
            <person name="Revuelta J.L."/>
            <person name="Rieger M."/>
            <person name="Salom D."/>
            <person name="Saluz H.P."/>
            <person name="Saiz J.E."/>
            <person name="Saren A.-M."/>
            <person name="Schaefer M."/>
            <person name="Scharfe M."/>
            <person name="Schmidt E.R."/>
            <person name="Schneider C."/>
            <person name="Scholler P."/>
            <person name="Schwarz S."/>
            <person name="Soler-Mira A."/>
            <person name="Urrestarazu L.A."/>
            <person name="Verhasselt P."/>
            <person name="Vissers S."/>
            <person name="Voet M."/>
            <person name="Volckaert G."/>
            <person name="Wagner G."/>
            <person name="Wambutt R."/>
            <person name="Wedler E."/>
            <person name="Wedler H."/>
            <person name="Woelfl S."/>
            <person name="Harris D.E."/>
            <person name="Bowman S."/>
            <person name="Brown D."/>
            <person name="Churcher C.M."/>
            <person name="Connor R."/>
            <person name="Dedman K."/>
            <person name="Gentles S."/>
            <person name="Hamlin N."/>
            <person name="Hunt S."/>
            <person name="Jones L."/>
            <person name="McDonald S."/>
            <person name="Murphy L.D."/>
            <person name="Niblett D."/>
            <person name="Odell C."/>
            <person name="Oliver K."/>
            <person name="Rajandream M.A."/>
            <person name="Richards C."/>
            <person name="Shore L."/>
            <person name="Walsh S.V."/>
            <person name="Barrell B.G."/>
            <person name="Dietrich F.S."/>
            <person name="Mulligan J.T."/>
            <person name="Allen E."/>
            <person name="Araujo R."/>
            <person name="Aviles E."/>
            <person name="Berno A."/>
            <person name="Carpenter J."/>
            <person name="Chen E."/>
            <person name="Cherry J.M."/>
            <person name="Chung E."/>
            <person name="Duncan M."/>
            <person name="Hunicke-Smith S."/>
            <person name="Hyman R.W."/>
            <person name="Komp C."/>
            <person name="Lashkari D."/>
            <person name="Lew H."/>
            <person name="Lin D."/>
            <person name="Mosedale D."/>
            <person name="Nakahara K."/>
            <person name="Namath A."/>
            <person name="Oefner P."/>
            <person name="Oh C."/>
            <person name="Petel F.X."/>
            <person name="Roberts D."/>
            <person name="Schramm S."/>
            <person name="Schroeder M."/>
            <person name="Shogren T."/>
            <person name="Shroff N."/>
            <person name="Winant A."/>
            <person name="Yelton M.A."/>
            <person name="Botstein D."/>
            <person name="Davis R.W."/>
            <person name="Johnston M."/>
            <person name="Andrews S."/>
            <person name="Brinkman R."/>
            <person name="Cooper J."/>
            <person name="Ding H."/>
            <person name="Du Z."/>
            <person name="Favello A."/>
            <person name="Fulton L."/>
            <person name="Gattung S."/>
            <person name="Greco T."/>
            <person name="Hallsworth K."/>
            <person name="Hawkins J."/>
            <person name="Hillier L.W."/>
            <person name="Jier M."/>
            <person name="Johnson D."/>
            <person name="Johnston L."/>
            <person name="Kirsten J."/>
            <person name="Kucaba T."/>
            <person name="Langston Y."/>
            <person name="Latreille P."/>
            <person name="Le T."/>
            <person name="Mardis E."/>
            <person name="Menezes S."/>
            <person name="Miller N."/>
            <person name="Nhan M."/>
            <person name="Pauley A."/>
            <person name="Peluso D."/>
            <person name="Rifkin L."/>
            <person name="Riles L."/>
            <person name="Taich A."/>
            <person name="Trevaskis E."/>
            <person name="Vignati D."/>
            <person name="Wilcox L."/>
            <person name="Wohldman P."/>
            <person name="Vaudin M."/>
            <person name="Wilson R."/>
            <person name="Waterston R."/>
            <person name="Albermann K."/>
            <person name="Hani J."/>
            <person name="Heumann K."/>
            <person name="Kleine K."/>
            <person name="Mewes H.-W."/>
            <person name="Zollner A."/>
            <person name="Zaccaria P."/>
        </authorList>
    </citation>
    <scope>NUCLEOTIDE SEQUENCE [LARGE SCALE GENOMIC DNA]</scope>
    <source>
        <strain>ATCC 204508 / S288c</strain>
    </source>
</reference>
<reference key="3">
    <citation type="journal article" date="2014" name="G3 (Bethesda)">
        <title>The reference genome sequence of Saccharomyces cerevisiae: Then and now.</title>
        <authorList>
            <person name="Engel S.R."/>
            <person name="Dietrich F.S."/>
            <person name="Fisk D.G."/>
            <person name="Binkley G."/>
            <person name="Balakrishnan R."/>
            <person name="Costanzo M.C."/>
            <person name="Dwight S.S."/>
            <person name="Hitz B.C."/>
            <person name="Karra K."/>
            <person name="Nash R.S."/>
            <person name="Weng S."/>
            <person name="Wong E.D."/>
            <person name="Lloyd P."/>
            <person name="Skrzypek M.S."/>
            <person name="Miyasato S.R."/>
            <person name="Simison M."/>
            <person name="Cherry J.M."/>
        </authorList>
    </citation>
    <scope>GENOME REANNOTATION</scope>
    <source>
        <strain>ATCC 204508 / S288c</strain>
    </source>
</reference>
<reference key="4">
    <citation type="journal article" date="2007" name="Appl. Microbiol. Biotechnol.">
        <title>Reducing haziness in white wine by overexpression of Saccharomyces cerevisiae genes YOL155c and YDR055w.</title>
        <authorList>
            <person name="Brown S.L."/>
            <person name="Stockdale V.J."/>
            <person name="Pettolino F."/>
            <person name="Pocock K.F."/>
            <person name="de Barros Lopes M."/>
            <person name="Williams P.J."/>
            <person name="Bacic A."/>
            <person name="Fincher G.B."/>
            <person name="Hoej P.B."/>
            <person name="Waters E.J."/>
        </authorList>
    </citation>
    <scope>PROTEIN SEQUENCE OF 48-52; 65-71; 126-146; 164-173; 180-185; 201-225; 227-260 AND 327-334</scope>
    <scope>GLYCOSYLATION AT ASN-210; ASN-228; ASN-235; ASN-242 AND ASN-329</scope>
    <scope>FUNCTION</scope>
    <scope>BIOTECHNOLOGY</scope>
    <source>
        <strain>Maurivin PDM</strain>
    </source>
</reference>
<reference key="5">
    <citation type="journal article" date="1999" name="J. Bacteriol.">
        <title>Amino acid residues in the omega-minus region participate in cellular localization of yeast glycosylphosphatidylinositol-attached proteins.</title>
        <authorList>
            <person name="Hamada K."/>
            <person name="Terashima H."/>
            <person name="Arisawa M."/>
            <person name="Yabuki N."/>
            <person name="Kitada K."/>
        </authorList>
    </citation>
    <scope>GPI-ANCHOR</scope>
    <scope>SUBCELLULAR LOCATION</scope>
</reference>
<reference key="6">
    <citation type="journal article" date="1999" name="Mol. Microbiol.">
        <title>Genome-wide analysis of gene expression regulated by the yeast cell wall integrity signalling pathway.</title>
        <authorList>
            <person name="Jung U.S."/>
            <person name="Levin D.E."/>
        </authorList>
    </citation>
    <scope>INDUCTION</scope>
</reference>
<reference key="7">
    <citation type="journal article" date="1999" name="Yeast">
        <title>Two-dimensional analysis of proteins secreted by Saccharomyces cerevisiae regenerating protoplasts: a novel approach to study the cell wall.</title>
        <authorList>
            <person name="Pardo M."/>
            <person name="Monteoliva L."/>
            <person name="Pla J."/>
            <person name="Sanchez M."/>
            <person name="Gil C."/>
            <person name="Nombela C."/>
        </authorList>
    </citation>
    <scope>IDENTIFICATION</scope>
</reference>
<reference key="8">
    <citation type="journal article" date="2000" name="Mol. Gen. Genet.">
        <title>Up-regulation of genes encoding glycosylphosphatidylinositol (GPI)-attached proteins in response to cell wall damage caused by disruption of FKS1 in Saccharomyces cerevisiae.</title>
        <authorList>
            <person name="Terashima H."/>
            <person name="Yabuki N."/>
            <person name="Arisawa M."/>
            <person name="Hamada K."/>
            <person name="Kitada K."/>
        </authorList>
    </citation>
    <scope>GPI-ANCHOR</scope>
    <scope>INDUCTION</scope>
</reference>
<reference key="9">
    <citation type="journal article" date="2003" name="Nature">
        <title>Global analysis of protein expression in yeast.</title>
        <authorList>
            <person name="Ghaemmaghami S."/>
            <person name="Huh W.-K."/>
            <person name="Bower K."/>
            <person name="Howson R.W."/>
            <person name="Belle A."/>
            <person name="Dephoure N."/>
            <person name="O'Shea E.K."/>
            <person name="Weissman J.S."/>
        </authorList>
    </citation>
    <scope>LEVEL OF PROTEIN EXPRESSION [LARGE SCALE ANALYSIS]</scope>
</reference>
<reference key="10">
    <citation type="journal article" date="2004" name="Microbiology">
        <title>PST1 and ECM33 encode two yeast cell surface GPI proteins important for cell wall integrity.</title>
        <authorList>
            <person name="Pardo M."/>
            <person name="Monteoliva L."/>
            <person name="Vazquez P."/>
            <person name="Martinez R."/>
            <person name="Molero G."/>
            <person name="Nombela C."/>
            <person name="Gil C."/>
        </authorList>
    </citation>
    <scope>FUNCTION</scope>
    <scope>SUBCELLULAR LOCATION</scope>
</reference>
<reference key="11">
    <citation type="journal article" date="2004" name="Yeast">
        <title>Characterization of the transcriptional response to cell wall stress in Saccharomyces cerevisiae.</title>
        <authorList>
            <person name="Boorsma A."/>
            <person name="de Nobel H."/>
            <person name="ter Riet B."/>
            <person name="Bargmann B."/>
            <person name="Brul S."/>
            <person name="Hellingwerf K.J."/>
            <person name="Klis F.M."/>
        </authorList>
    </citation>
    <scope>INDUCTION</scope>
</reference>